<gene>
    <name type="primary">scnA'</name>
</gene>
<gene>
    <name type="primary">scnA''</name>
</gene>
<evidence type="ECO:0000250" key="1"/>
<evidence type="ECO:0000250" key="2">
    <source>
        <dbReference type="UniProtKB" id="P36501"/>
    </source>
</evidence>
<evidence type="ECO:0000305" key="3"/>
<organism>
    <name type="scientific">Streptococcus pyogenes serotype M49</name>
    <dbReference type="NCBI Taxonomy" id="301452"/>
    <lineage>
        <taxon>Bacteria</taxon>
        <taxon>Bacillati</taxon>
        <taxon>Bacillota</taxon>
        <taxon>Bacilli</taxon>
        <taxon>Lactobacillales</taxon>
        <taxon>Streptococcaceae</taxon>
        <taxon>Streptococcus</taxon>
    </lineage>
</organism>
<reference key="1">
    <citation type="journal article" date="1994" name="Appl. Environ. Microbiol.">
        <title>Duplication of the lantibiotic structural gene in M-type 49 group A streptococcus strains producing streptococcin A-M49.</title>
        <authorList>
            <person name="Hynes W.L."/>
            <person name="Friend V.L."/>
            <person name="Ferretti J.J."/>
        </authorList>
    </citation>
    <scope>NUCLEOTIDE SEQUENCE [GENOMIC DNA]</scope>
    <source>
        <strain>GT9538 / Serotype M49</strain>
    </source>
</reference>
<keyword id="KW-0044">Antibiotic</keyword>
<keyword id="KW-0929">Antimicrobial</keyword>
<keyword id="KW-0078">Bacteriocin</keyword>
<keyword id="KW-0425">Lantibiotic</keyword>
<keyword id="KW-0964">Secreted</keyword>
<keyword id="KW-0883">Thioether bond</keyword>
<protein>
    <recommendedName>
        <fullName>Lantibiotic streptococcin A-M49</fullName>
    </recommendedName>
    <alternativeName>
        <fullName>Antibacterial peptide A-M49</fullName>
    </alternativeName>
</protein>
<accession>Q54957</accession>
<dbReference type="EMBL" id="L36235">
    <property type="protein sequence ID" value="AAA62362.1"/>
    <property type="molecule type" value="Genomic_DNA"/>
</dbReference>
<dbReference type="EMBL" id="L36235">
    <property type="protein sequence ID" value="AAA62361.1"/>
    <property type="molecule type" value="Genomic_DNA"/>
</dbReference>
<dbReference type="TCDB" id="1.C.21.1.3">
    <property type="family name" value="the lacticin 481 (lacticin 481) family"/>
</dbReference>
<dbReference type="GO" id="GO:0009986">
    <property type="term" value="C:cell surface"/>
    <property type="evidence" value="ECO:0007669"/>
    <property type="project" value="UniProtKB-SubCell"/>
</dbReference>
<dbReference type="GO" id="GO:0005576">
    <property type="term" value="C:extracellular region"/>
    <property type="evidence" value="ECO:0007669"/>
    <property type="project" value="UniProtKB-SubCell"/>
</dbReference>
<dbReference type="GO" id="GO:0005102">
    <property type="term" value="F:signaling receptor binding"/>
    <property type="evidence" value="ECO:0007669"/>
    <property type="project" value="UniProtKB-KW"/>
</dbReference>
<dbReference type="GO" id="GO:0042742">
    <property type="term" value="P:defense response to bacterium"/>
    <property type="evidence" value="ECO:0007669"/>
    <property type="project" value="UniProtKB-KW"/>
</dbReference>
<dbReference type="GO" id="GO:0031640">
    <property type="term" value="P:killing of cells of another organism"/>
    <property type="evidence" value="ECO:0007669"/>
    <property type="project" value="UniProtKB-KW"/>
</dbReference>
<dbReference type="InterPro" id="IPR007682">
    <property type="entry name" value="Lantibiotic_typ-A_Lactobact"/>
</dbReference>
<dbReference type="NCBIfam" id="NF040664">
    <property type="entry name" value="HEC_x9_TCC_lant"/>
    <property type="match status" value="1"/>
</dbReference>
<dbReference type="Pfam" id="PF04604">
    <property type="entry name" value="L_biotic_typeA"/>
    <property type="match status" value="1"/>
</dbReference>
<comment type="function">
    <text evidence="1">Lanthionine-containing peptide antibiotic (lantibiotic) active on certain Gram-positive bacteria. The bactericidal activity of lantibiotics is based on depolarization of energized bacterial cytoplasmic membranes, initiated by the formation of aqueous transmembrane pores (By similarity).</text>
</comment>
<comment type="subcellular location">
    <subcellularLocation>
        <location evidence="1">Secreted</location>
    </subcellularLocation>
    <subcellularLocation>
        <location evidence="1">Cell surface</location>
    </subcellularLocation>
    <text evidence="1">Either cell associated or in a released extracellular form.</text>
</comment>
<comment type="PTM">
    <text evidence="1">Maturation of lantibiotics involves the enzymatic conversion of Thr, and Ser into dehydrated AA and the formation of thioether bonds with cysteine. This is followed by membrane translocation and cleavage of the modified precursor (By similarity).</text>
</comment>
<comment type="miscellaneous">
    <text>There are two genes coding for lantibiotic streptococcin A-M49, their coding sequences only differ in the propeptide region.</text>
</comment>
<comment type="similarity">
    <text evidence="3">Belongs to the type A lantibiotic family.</text>
</comment>
<feature type="propeptide" id="PRO_0000017136" evidence="1">
    <location>
        <begin position="1"/>
        <end position="25"/>
    </location>
</feature>
<feature type="peptide" id="PRO_0000017137" description="Lantibiotic streptococcin A-M49">
    <location>
        <begin position="26"/>
        <end position="51"/>
    </location>
</feature>
<feature type="modified residue" description="2,3-didehydrobutyrine" evidence="2">
    <location>
        <position position="48"/>
    </location>
</feature>
<feature type="cross-link" description="Beta-methyllanthionine (Thr-Cys)" evidence="2">
    <location>
        <begin position="33"/>
        <end position="38"/>
    </location>
</feature>
<feature type="cross-link" description="Lanthionine (Ser-Cys)" evidence="2">
    <location>
        <begin position="35"/>
        <end position="49"/>
    </location>
</feature>
<feature type="cross-link" description="Beta-methyllanthionine (Thr-Cys)" evidence="2">
    <location>
        <begin position="42"/>
        <end position="50"/>
    </location>
</feature>
<feature type="sequence variant" description="In scnA''.">
    <original>T</original>
    <variation>E</variation>
    <location>
        <position position="2"/>
    </location>
</feature>
<feature type="sequence variant" description="In scnA''.">
    <original>EH</original>
    <variation>NN</variation>
    <location>
        <begin position="4"/>
        <end position="5"/>
    </location>
</feature>
<feature type="sequence variant" description="In scnA''.">
    <original>I</original>
    <variation>V</variation>
    <location>
        <position position="7"/>
    </location>
</feature>
<sequence>MTKEHEIINSIQEVSLEELDQIIGAGKNGVFKTISHECHLNTWAFLATCCS</sequence>
<name>LANB_STRP9</name>
<proteinExistence type="inferred from homology"/>